<dbReference type="EMBL" id="AE006914">
    <property type="protein sequence ID" value="AAL03529.1"/>
    <property type="molecule type" value="Genomic_DNA"/>
</dbReference>
<dbReference type="PIR" id="G97823">
    <property type="entry name" value="G97823"/>
</dbReference>
<dbReference type="RefSeq" id="WP_010977580.1">
    <property type="nucleotide sequence ID" value="NC_003103.1"/>
</dbReference>
<dbReference type="SMR" id="Q92GY1"/>
<dbReference type="GeneID" id="928134"/>
<dbReference type="KEGG" id="rco:RC0991"/>
<dbReference type="PATRIC" id="fig|272944.4.peg.1131"/>
<dbReference type="HOGENOM" id="CLU_065464_1_2_5"/>
<dbReference type="Proteomes" id="UP000000816">
    <property type="component" value="Chromosome"/>
</dbReference>
<dbReference type="GO" id="GO:1990904">
    <property type="term" value="C:ribonucleoprotein complex"/>
    <property type="evidence" value="ECO:0007669"/>
    <property type="project" value="UniProtKB-KW"/>
</dbReference>
<dbReference type="GO" id="GO:0005840">
    <property type="term" value="C:ribosome"/>
    <property type="evidence" value="ECO:0007669"/>
    <property type="project" value="UniProtKB-KW"/>
</dbReference>
<dbReference type="GO" id="GO:0019843">
    <property type="term" value="F:rRNA binding"/>
    <property type="evidence" value="ECO:0007669"/>
    <property type="project" value="UniProtKB-UniRule"/>
</dbReference>
<dbReference type="GO" id="GO:0003735">
    <property type="term" value="F:structural constituent of ribosome"/>
    <property type="evidence" value="ECO:0007669"/>
    <property type="project" value="InterPro"/>
</dbReference>
<dbReference type="GO" id="GO:0002181">
    <property type="term" value="P:cytoplasmic translation"/>
    <property type="evidence" value="ECO:0007669"/>
    <property type="project" value="TreeGrafter"/>
</dbReference>
<dbReference type="FunFam" id="3.90.930.12:FF:000002">
    <property type="entry name" value="50S ribosomal protein L6"/>
    <property type="match status" value="1"/>
</dbReference>
<dbReference type="Gene3D" id="3.90.930.12">
    <property type="entry name" value="Ribosomal protein L6, alpha-beta domain"/>
    <property type="match status" value="2"/>
</dbReference>
<dbReference type="HAMAP" id="MF_01365_B">
    <property type="entry name" value="Ribosomal_uL6_B"/>
    <property type="match status" value="1"/>
</dbReference>
<dbReference type="InterPro" id="IPR000702">
    <property type="entry name" value="Ribosomal_uL6-like"/>
</dbReference>
<dbReference type="InterPro" id="IPR036789">
    <property type="entry name" value="Ribosomal_uL6-like_a/b-dom_sf"/>
</dbReference>
<dbReference type="InterPro" id="IPR020040">
    <property type="entry name" value="Ribosomal_uL6_a/b-dom"/>
</dbReference>
<dbReference type="InterPro" id="IPR019906">
    <property type="entry name" value="Ribosomal_uL6_bac-type"/>
</dbReference>
<dbReference type="InterPro" id="IPR002358">
    <property type="entry name" value="Ribosomal_uL6_CS"/>
</dbReference>
<dbReference type="NCBIfam" id="TIGR03654">
    <property type="entry name" value="L6_bact"/>
    <property type="match status" value="1"/>
</dbReference>
<dbReference type="PANTHER" id="PTHR11655">
    <property type="entry name" value="60S/50S RIBOSOMAL PROTEIN L6/L9"/>
    <property type="match status" value="1"/>
</dbReference>
<dbReference type="PANTHER" id="PTHR11655:SF14">
    <property type="entry name" value="LARGE RIBOSOMAL SUBUNIT PROTEIN UL6M"/>
    <property type="match status" value="1"/>
</dbReference>
<dbReference type="Pfam" id="PF00347">
    <property type="entry name" value="Ribosomal_L6"/>
    <property type="match status" value="2"/>
</dbReference>
<dbReference type="PIRSF" id="PIRSF002162">
    <property type="entry name" value="Ribosomal_L6"/>
    <property type="match status" value="1"/>
</dbReference>
<dbReference type="PRINTS" id="PR00059">
    <property type="entry name" value="RIBOSOMALL6"/>
</dbReference>
<dbReference type="SUPFAM" id="SSF56053">
    <property type="entry name" value="Ribosomal protein L6"/>
    <property type="match status" value="2"/>
</dbReference>
<dbReference type="PROSITE" id="PS00525">
    <property type="entry name" value="RIBOSOMAL_L6_1"/>
    <property type="match status" value="1"/>
</dbReference>
<name>RL6_RICCN</name>
<evidence type="ECO:0000255" key="1">
    <source>
        <dbReference type="HAMAP-Rule" id="MF_01365"/>
    </source>
</evidence>
<evidence type="ECO:0000305" key="2"/>
<comment type="function">
    <text evidence="1">This protein binds to the 23S rRNA, and is important in its secondary structure. It is located near the subunit interface in the base of the L7/L12 stalk, and near the tRNA binding site of the peptidyltransferase center.</text>
</comment>
<comment type="subunit">
    <text evidence="1">Part of the 50S ribosomal subunit.</text>
</comment>
<comment type="similarity">
    <text evidence="1">Belongs to the universal ribosomal protein uL6 family.</text>
</comment>
<gene>
    <name evidence="1" type="primary">rplF</name>
    <name type="ordered locus">RC0991</name>
</gene>
<organism>
    <name type="scientific">Rickettsia conorii (strain ATCC VR-613 / Malish 7)</name>
    <dbReference type="NCBI Taxonomy" id="272944"/>
    <lineage>
        <taxon>Bacteria</taxon>
        <taxon>Pseudomonadati</taxon>
        <taxon>Pseudomonadota</taxon>
        <taxon>Alphaproteobacteria</taxon>
        <taxon>Rickettsiales</taxon>
        <taxon>Rickettsiaceae</taxon>
        <taxon>Rickettsieae</taxon>
        <taxon>Rickettsia</taxon>
        <taxon>spotted fever group</taxon>
    </lineage>
</organism>
<accession>Q92GY1</accession>
<feature type="chain" id="PRO_0000274836" description="Large ribosomal subunit protein uL6">
    <location>
        <begin position="1"/>
        <end position="177"/>
    </location>
</feature>
<proteinExistence type="inferred from homology"/>
<keyword id="KW-0687">Ribonucleoprotein</keyword>
<keyword id="KW-0689">Ribosomal protein</keyword>
<keyword id="KW-0694">RNA-binding</keyword>
<keyword id="KW-0699">rRNA-binding</keyword>
<protein>
    <recommendedName>
        <fullName evidence="1">Large ribosomal subunit protein uL6</fullName>
    </recommendedName>
    <alternativeName>
        <fullName evidence="2">50S ribosomal protein L6</fullName>
    </alternativeName>
</protein>
<sequence>MSRVGKLPITIPEGVKIGLNDLEVKISGPKGELSKTFKGNIAISLAENKLLVKPLAANKNARAMWGTARSIISNMVTGVKEGFKLKLEINGVGYRAMVKGKYLNLMLAKSHNTKIEIPSDIKIEMPKQNIIILEGTDKEKLGQFASIIIKQRPPEPYKGKGIKFENQCIPRKEGKKN</sequence>
<reference key="1">
    <citation type="journal article" date="2001" name="Science">
        <title>Mechanisms of evolution in Rickettsia conorii and R. prowazekii.</title>
        <authorList>
            <person name="Ogata H."/>
            <person name="Audic S."/>
            <person name="Renesto-Audiffren P."/>
            <person name="Fournier P.-E."/>
            <person name="Barbe V."/>
            <person name="Samson D."/>
            <person name="Roux V."/>
            <person name="Cossart P."/>
            <person name="Weissenbach J."/>
            <person name="Claverie J.-M."/>
            <person name="Raoult D."/>
        </authorList>
    </citation>
    <scope>NUCLEOTIDE SEQUENCE [LARGE SCALE GENOMIC DNA]</scope>
    <source>
        <strain>ATCC VR-613 / Malish 7</strain>
    </source>
</reference>